<sequence length="636" mass="69395">MSSAEALAFDVIVIGGGHAGCEAASAAARAGARTALVTHRFDTIGVISCNPAIGGLGKGHLVREIDALDGLMGRVADRAGIQFRLLNRRKGPAVRGPRTQADRKLYRLAIQQMITEQENLTVVEGGAADLVCDGERISGVTLADGRVLKCGAVVLTTGTFLNGLIHIGEKRFPAGRMGEKPALGLSERLLSFGFTLGRLKTGTPPRLDGRTIDWQSLDMQSADEEPVPFSLMTDRITTPQIECGITRTTPETHDIIRANLHRSAMYSGSIEGIGPRYCPSVEDKIVKFGDRDGHQIFLEPEGLDDDTVYPNGISTSLPEDVQLEILKTIPGLEKAVLLQPGYAIEYDFIDPRELKRSLETRKVCGLFLAGQINGTTGYEEAGAQGLLAGLNAARRAAGSEPVILQRTEAYIGVMVDDLTSRGVSEPYRMFTSRAEFRLSLRADNADQRLTPLADEVGILSKERRKRYLTRETALSHARMVTQSLSITPNLAGYYDLRLNQDGVRRSAYDLLSYPDINLDRLIAIWPELASIDPVTREALEIEAQYAVYMERQQSDIAVMEREERLLIPSGLDFDAISGLSNELKQKLKQRKPETIAEAQRVDGMTPAAVALLIAQIRKFGGRQKLAAETLEGKGAA</sequence>
<feature type="chain" id="PRO_1000076310" description="tRNA uridine 5-carboxymethylaminomethyl modification enzyme MnmG">
    <location>
        <begin position="1"/>
        <end position="636"/>
    </location>
</feature>
<feature type="binding site" evidence="1">
    <location>
        <begin position="15"/>
        <end position="20"/>
    </location>
    <ligand>
        <name>FAD</name>
        <dbReference type="ChEBI" id="CHEBI:57692"/>
    </ligand>
</feature>
<feature type="binding site" evidence="1">
    <location>
        <begin position="274"/>
        <end position="288"/>
    </location>
    <ligand>
        <name>NAD(+)</name>
        <dbReference type="ChEBI" id="CHEBI:57540"/>
    </ligand>
</feature>
<reference key="1">
    <citation type="submission" date="2007-12" db="EMBL/GenBank/DDBJ databases">
        <title>Brucella suis ATCC 23445 whole genome shotgun sequencing project.</title>
        <authorList>
            <person name="Setubal J.C."/>
            <person name="Bowns C."/>
            <person name="Boyle S."/>
            <person name="Crasta O.R."/>
            <person name="Czar M.J."/>
            <person name="Dharmanolla C."/>
            <person name="Gillespie J.J."/>
            <person name="Kenyon R.W."/>
            <person name="Lu J."/>
            <person name="Mane S."/>
            <person name="Mohapatra S."/>
            <person name="Nagrani S."/>
            <person name="Purkayastha A."/>
            <person name="Rajasimha H.K."/>
            <person name="Shallom J.M."/>
            <person name="Shallom S."/>
            <person name="Shukla M."/>
            <person name="Snyder E.E."/>
            <person name="Sobral B.W."/>
            <person name="Wattam A.R."/>
            <person name="Will R."/>
            <person name="Williams K."/>
            <person name="Yoo H."/>
            <person name="Bruce D."/>
            <person name="Detter C."/>
            <person name="Munk C."/>
            <person name="Brettin T.S."/>
        </authorList>
    </citation>
    <scope>NUCLEOTIDE SEQUENCE [LARGE SCALE GENOMIC DNA]</scope>
    <source>
        <strain>ATCC 23445 / NCTC 10510</strain>
    </source>
</reference>
<proteinExistence type="inferred from homology"/>
<evidence type="ECO:0000255" key="1">
    <source>
        <dbReference type="HAMAP-Rule" id="MF_00129"/>
    </source>
</evidence>
<gene>
    <name evidence="1" type="primary">mnmG</name>
    <name evidence="1" type="synonym">gidA</name>
    <name type="ordered locus">BSUIS_A1902</name>
</gene>
<name>MNMG_BRUSI</name>
<organism>
    <name type="scientific">Brucella suis (strain ATCC 23445 / NCTC 10510)</name>
    <dbReference type="NCBI Taxonomy" id="470137"/>
    <lineage>
        <taxon>Bacteria</taxon>
        <taxon>Pseudomonadati</taxon>
        <taxon>Pseudomonadota</taxon>
        <taxon>Alphaproteobacteria</taxon>
        <taxon>Hyphomicrobiales</taxon>
        <taxon>Brucellaceae</taxon>
        <taxon>Brucella/Ochrobactrum group</taxon>
        <taxon>Brucella</taxon>
    </lineage>
</organism>
<accession>B0CJG1</accession>
<comment type="function">
    <text evidence="1">NAD-binding protein involved in the addition of a carboxymethylaminomethyl (cmnm) group at the wobble position (U34) of certain tRNAs, forming tRNA-cmnm(5)s(2)U34.</text>
</comment>
<comment type="cofactor">
    <cofactor evidence="1">
        <name>FAD</name>
        <dbReference type="ChEBI" id="CHEBI:57692"/>
    </cofactor>
</comment>
<comment type="subunit">
    <text evidence="1">Homodimer. Heterotetramer of two MnmE and two MnmG subunits.</text>
</comment>
<comment type="subcellular location">
    <subcellularLocation>
        <location evidence="1">Cytoplasm</location>
    </subcellularLocation>
</comment>
<comment type="similarity">
    <text evidence="1">Belongs to the MnmG family.</text>
</comment>
<dbReference type="EMBL" id="CP000911">
    <property type="protein sequence ID" value="ABY38913.1"/>
    <property type="molecule type" value="Genomic_DNA"/>
</dbReference>
<dbReference type="RefSeq" id="WP_006071756.1">
    <property type="nucleotide sequence ID" value="NC_010169.1"/>
</dbReference>
<dbReference type="SMR" id="B0CJG1"/>
<dbReference type="KEGG" id="bmt:BSUIS_A1902"/>
<dbReference type="HOGENOM" id="CLU_007831_2_2_5"/>
<dbReference type="Proteomes" id="UP000008545">
    <property type="component" value="Chromosome I"/>
</dbReference>
<dbReference type="GO" id="GO:0005829">
    <property type="term" value="C:cytosol"/>
    <property type="evidence" value="ECO:0007669"/>
    <property type="project" value="TreeGrafter"/>
</dbReference>
<dbReference type="GO" id="GO:0050660">
    <property type="term" value="F:flavin adenine dinucleotide binding"/>
    <property type="evidence" value="ECO:0007669"/>
    <property type="project" value="UniProtKB-UniRule"/>
</dbReference>
<dbReference type="GO" id="GO:0030488">
    <property type="term" value="P:tRNA methylation"/>
    <property type="evidence" value="ECO:0007669"/>
    <property type="project" value="TreeGrafter"/>
</dbReference>
<dbReference type="GO" id="GO:0002098">
    <property type="term" value="P:tRNA wobble uridine modification"/>
    <property type="evidence" value="ECO:0007669"/>
    <property type="project" value="InterPro"/>
</dbReference>
<dbReference type="FunFam" id="3.50.50.60:FF:000145">
    <property type="entry name" value="tRNA uridine 5-carboxymethylaminomethyl modification enzyme"/>
    <property type="match status" value="1"/>
</dbReference>
<dbReference type="FunFam" id="1.10.150.570:FF:000001">
    <property type="entry name" value="tRNA uridine 5-carboxymethylaminomethyl modification enzyme MnmG"/>
    <property type="match status" value="1"/>
</dbReference>
<dbReference type="FunFam" id="3.50.50.60:FF:000002">
    <property type="entry name" value="tRNA uridine 5-carboxymethylaminomethyl modification enzyme MnmG"/>
    <property type="match status" value="1"/>
</dbReference>
<dbReference type="Gene3D" id="3.50.50.60">
    <property type="entry name" value="FAD/NAD(P)-binding domain"/>
    <property type="match status" value="2"/>
</dbReference>
<dbReference type="Gene3D" id="1.10.150.570">
    <property type="entry name" value="GidA associated domain, C-terminal subdomain"/>
    <property type="match status" value="1"/>
</dbReference>
<dbReference type="Gene3D" id="1.10.10.1800">
    <property type="entry name" value="tRNA uridine 5-carboxymethylaminomethyl modification enzyme MnmG/GidA"/>
    <property type="match status" value="1"/>
</dbReference>
<dbReference type="HAMAP" id="MF_00129">
    <property type="entry name" value="MnmG_GidA"/>
    <property type="match status" value="1"/>
</dbReference>
<dbReference type="InterPro" id="IPR036188">
    <property type="entry name" value="FAD/NAD-bd_sf"/>
</dbReference>
<dbReference type="InterPro" id="IPR049312">
    <property type="entry name" value="GIDA_C_N"/>
</dbReference>
<dbReference type="InterPro" id="IPR004416">
    <property type="entry name" value="MnmG"/>
</dbReference>
<dbReference type="InterPro" id="IPR002218">
    <property type="entry name" value="MnmG-rel"/>
</dbReference>
<dbReference type="InterPro" id="IPR020595">
    <property type="entry name" value="MnmG-rel_CS"/>
</dbReference>
<dbReference type="InterPro" id="IPR026904">
    <property type="entry name" value="MnmG_C"/>
</dbReference>
<dbReference type="InterPro" id="IPR047001">
    <property type="entry name" value="MnmG_C_subdom"/>
</dbReference>
<dbReference type="InterPro" id="IPR044920">
    <property type="entry name" value="MnmG_C_subdom_sf"/>
</dbReference>
<dbReference type="InterPro" id="IPR040131">
    <property type="entry name" value="MnmG_N"/>
</dbReference>
<dbReference type="NCBIfam" id="TIGR00136">
    <property type="entry name" value="mnmG_gidA"/>
    <property type="match status" value="1"/>
</dbReference>
<dbReference type="PANTHER" id="PTHR11806">
    <property type="entry name" value="GLUCOSE INHIBITED DIVISION PROTEIN A"/>
    <property type="match status" value="1"/>
</dbReference>
<dbReference type="PANTHER" id="PTHR11806:SF0">
    <property type="entry name" value="PROTEIN MTO1 HOMOLOG, MITOCHONDRIAL"/>
    <property type="match status" value="1"/>
</dbReference>
<dbReference type="Pfam" id="PF01134">
    <property type="entry name" value="GIDA"/>
    <property type="match status" value="1"/>
</dbReference>
<dbReference type="Pfam" id="PF21680">
    <property type="entry name" value="GIDA_C_1st"/>
    <property type="match status" value="1"/>
</dbReference>
<dbReference type="Pfam" id="PF13932">
    <property type="entry name" value="SAM_GIDA_C"/>
    <property type="match status" value="1"/>
</dbReference>
<dbReference type="SMART" id="SM01228">
    <property type="entry name" value="GIDA_assoc_3"/>
    <property type="match status" value="1"/>
</dbReference>
<dbReference type="SUPFAM" id="SSF51905">
    <property type="entry name" value="FAD/NAD(P)-binding domain"/>
    <property type="match status" value="1"/>
</dbReference>
<dbReference type="PROSITE" id="PS01280">
    <property type="entry name" value="GIDA_1"/>
    <property type="match status" value="1"/>
</dbReference>
<dbReference type="PROSITE" id="PS01281">
    <property type="entry name" value="GIDA_2"/>
    <property type="match status" value="1"/>
</dbReference>
<protein>
    <recommendedName>
        <fullName evidence="1">tRNA uridine 5-carboxymethylaminomethyl modification enzyme MnmG</fullName>
    </recommendedName>
    <alternativeName>
        <fullName evidence="1">Glucose-inhibited division protein A</fullName>
    </alternativeName>
</protein>
<keyword id="KW-0963">Cytoplasm</keyword>
<keyword id="KW-0274">FAD</keyword>
<keyword id="KW-0285">Flavoprotein</keyword>
<keyword id="KW-0520">NAD</keyword>
<keyword id="KW-0819">tRNA processing</keyword>